<keyword id="KW-0108">Calcium channel impairing toxin</keyword>
<keyword id="KW-1015">Disulfide bond</keyword>
<keyword id="KW-0872">Ion channel impairing toxin</keyword>
<keyword id="KW-0528">Neurotoxin</keyword>
<keyword id="KW-0964">Secreted</keyword>
<keyword id="KW-0732">Signal</keyword>
<keyword id="KW-0800">Toxin</keyword>
<comment type="function">
    <text evidence="1">Blocks contraction of smooth muscle elicited by high potassium-induced depolarization, but does not block caffeine-stimulated contraction. May target voltage-gated calcium channels on smooth muscle (By similarity).</text>
</comment>
<comment type="subcellular location">
    <subcellularLocation>
        <location>Secreted</location>
    </subcellularLocation>
</comment>
<comment type="tissue specificity">
    <text>Expressed by the venom gland.</text>
</comment>
<comment type="similarity">
    <text evidence="4">Belongs to the CRISP family.</text>
</comment>
<comment type="sequence caution" evidence="4">
    <conflict type="erroneous termination">
        <sequence resource="EMBL-CDS" id="AAL54896"/>
    </conflict>
    <text>Truncated C-terminus.</text>
</comment>
<reference key="1">
    <citation type="submission" date="1999-06" db="EMBL/GenBank/DDBJ databases">
        <title>A novel cysteine-rich venom protein precursor (CRVP) mRNA from sea snake (Lapemis hardwickii).</title>
        <authorList>
            <person name="Wei J."/>
            <person name="Zhong X."/>
            <person name="Yang W."/>
            <person name="Zhao G."/>
            <person name="Xu A."/>
        </authorList>
    </citation>
    <scope>NUCLEOTIDE SEQUENCE [MRNA]</scope>
    <source>
        <tissue>Venom gland</tissue>
    </source>
</reference>
<proteinExistence type="evidence at transcript level"/>
<accession>Q8UW25</accession>
<organism>
    <name type="scientific">Hydrophis hardwickii</name>
    <name type="common">Hardwick's spine-bellied seasnake</name>
    <name type="synonym">Lapemis hardwickii</name>
    <dbReference type="NCBI Taxonomy" id="8781"/>
    <lineage>
        <taxon>Eukaryota</taxon>
        <taxon>Metazoa</taxon>
        <taxon>Chordata</taxon>
        <taxon>Craniata</taxon>
        <taxon>Vertebrata</taxon>
        <taxon>Euteleostomi</taxon>
        <taxon>Lepidosauria</taxon>
        <taxon>Squamata</taxon>
        <taxon>Bifurcata</taxon>
        <taxon>Unidentata</taxon>
        <taxon>Episquamata</taxon>
        <taxon>Toxicofera</taxon>
        <taxon>Serpentes</taxon>
        <taxon>Colubroidea</taxon>
        <taxon>Elapidae</taxon>
        <taxon>Hydrophiinae</taxon>
        <taxon>Hydrophis</taxon>
    </lineage>
</organism>
<sequence>MIAFIVLLSLAAVLQQSSGTVDFASESSNKKDYRREIVDKHNALRRSVKPTARNMLQMKWNSRAAQNAKRSADRCTFAHSPEHTRTVGKFRCGENIFMSSQPFAWSGVVQDWYDEIKNVVDGIGAKPPGSVIGHYTQIVWYKSHLLGCASAKCSSTKYLYVCQYCPAGNISSSIATPYKSGPSCGDCPSACVNGLCTNPCEYEDTFSNCKALAKKTKCKTEWIKSKCPATCFCHNKII</sequence>
<dbReference type="EMBL" id="AF159541">
    <property type="protein sequence ID" value="AAL54896.1"/>
    <property type="status" value="ALT_SEQ"/>
    <property type="molecule type" value="mRNA"/>
</dbReference>
<dbReference type="SMR" id="Q8UW25"/>
<dbReference type="GO" id="GO:0005576">
    <property type="term" value="C:extracellular region"/>
    <property type="evidence" value="ECO:0007669"/>
    <property type="project" value="UniProtKB-SubCell"/>
</dbReference>
<dbReference type="GO" id="GO:0005246">
    <property type="term" value="F:calcium channel regulator activity"/>
    <property type="evidence" value="ECO:0007669"/>
    <property type="project" value="UniProtKB-KW"/>
</dbReference>
<dbReference type="GO" id="GO:0090729">
    <property type="term" value="F:toxin activity"/>
    <property type="evidence" value="ECO:0007669"/>
    <property type="project" value="UniProtKB-KW"/>
</dbReference>
<dbReference type="CDD" id="cd05383">
    <property type="entry name" value="CAP_CRISP"/>
    <property type="match status" value="1"/>
</dbReference>
<dbReference type="FunFam" id="1.10.10.740:FF:000001">
    <property type="entry name" value="Cysteine-rich secretory protein 2"/>
    <property type="match status" value="1"/>
</dbReference>
<dbReference type="FunFam" id="3.40.33.10:FF:000005">
    <property type="entry name" value="Cysteine-rich secretory protein 2"/>
    <property type="match status" value="1"/>
</dbReference>
<dbReference type="Gene3D" id="3.40.33.10">
    <property type="entry name" value="CAP"/>
    <property type="match status" value="1"/>
</dbReference>
<dbReference type="Gene3D" id="1.10.10.740">
    <property type="entry name" value="Crisp domain"/>
    <property type="match status" value="1"/>
</dbReference>
<dbReference type="InterPro" id="IPR018244">
    <property type="entry name" value="Allrgn_V5/Tpx1_CS"/>
</dbReference>
<dbReference type="InterPro" id="IPR014044">
    <property type="entry name" value="CAP_dom"/>
</dbReference>
<dbReference type="InterPro" id="IPR035940">
    <property type="entry name" value="CAP_sf"/>
</dbReference>
<dbReference type="InterPro" id="IPR042076">
    <property type="entry name" value="Crisp-like_dom"/>
</dbReference>
<dbReference type="InterPro" id="IPR001283">
    <property type="entry name" value="CRISP-related"/>
</dbReference>
<dbReference type="InterPro" id="IPR013871">
    <property type="entry name" value="Cysteine_rich_secretory"/>
</dbReference>
<dbReference type="InterPro" id="IPR034117">
    <property type="entry name" value="SCP_CRISP"/>
</dbReference>
<dbReference type="InterPro" id="IPR003582">
    <property type="entry name" value="ShKT_dom"/>
</dbReference>
<dbReference type="PANTHER" id="PTHR10334">
    <property type="entry name" value="CYSTEINE-RICH SECRETORY PROTEIN-RELATED"/>
    <property type="match status" value="1"/>
</dbReference>
<dbReference type="Pfam" id="PF00188">
    <property type="entry name" value="CAP"/>
    <property type="match status" value="1"/>
</dbReference>
<dbReference type="Pfam" id="PF08562">
    <property type="entry name" value="Crisp"/>
    <property type="match status" value="1"/>
</dbReference>
<dbReference type="PRINTS" id="PR00837">
    <property type="entry name" value="V5TPXLIKE"/>
</dbReference>
<dbReference type="SMART" id="SM00198">
    <property type="entry name" value="SCP"/>
    <property type="match status" value="1"/>
</dbReference>
<dbReference type="SUPFAM" id="SSF57546">
    <property type="entry name" value="Crisp domain-like"/>
    <property type="match status" value="1"/>
</dbReference>
<dbReference type="SUPFAM" id="SSF55797">
    <property type="entry name" value="PR-1-like"/>
    <property type="match status" value="1"/>
</dbReference>
<dbReference type="PROSITE" id="PS01009">
    <property type="entry name" value="CRISP_1"/>
    <property type="match status" value="1"/>
</dbReference>
<dbReference type="PROSITE" id="PS01010">
    <property type="entry name" value="CRISP_2"/>
    <property type="match status" value="1"/>
</dbReference>
<dbReference type="PROSITE" id="PS51670">
    <property type="entry name" value="SHKT"/>
    <property type="match status" value="1"/>
</dbReference>
<protein>
    <recommendedName>
        <fullName>Cysteine-rich venom protein 1</fullName>
        <shortName>CRVP</shortName>
    </recommendedName>
</protein>
<feature type="signal peptide" evidence="2">
    <location>
        <begin position="1"/>
        <end position="19"/>
    </location>
</feature>
<feature type="chain" id="PRO_0000006276" description="Cysteine-rich venom protein 1">
    <location>
        <begin position="20"/>
        <end position="238"/>
    </location>
</feature>
<feature type="domain" description="SCP">
    <location>
        <begin position="38"/>
        <end position="164"/>
    </location>
</feature>
<feature type="domain" description="ShKT" evidence="3">
    <location>
        <begin position="200"/>
        <end position="233"/>
    </location>
</feature>
<feature type="disulfide bond" evidence="3">
    <location>
        <begin position="75"/>
        <end position="153"/>
    </location>
</feature>
<feature type="disulfide bond" evidence="3">
    <location>
        <begin position="92"/>
        <end position="165"/>
    </location>
</feature>
<feature type="disulfide bond" evidence="3">
    <location>
        <begin position="148"/>
        <end position="162"/>
    </location>
</feature>
<feature type="disulfide bond" evidence="3">
    <location>
        <begin position="184"/>
        <end position="191"/>
    </location>
</feature>
<feature type="disulfide bond" evidence="3">
    <location>
        <begin position="187"/>
        <end position="196"/>
    </location>
</feature>
<feature type="disulfide bond" evidence="3">
    <location>
        <begin position="200"/>
        <end position="233"/>
    </location>
</feature>
<feature type="disulfide bond" evidence="3">
    <location>
        <begin position="209"/>
        <end position="227"/>
    </location>
</feature>
<feature type="disulfide bond" evidence="3">
    <location>
        <begin position="218"/>
        <end position="231"/>
    </location>
</feature>
<name>CRVP1_HYDHA</name>
<evidence type="ECO:0000250" key="1"/>
<evidence type="ECO:0000255" key="2"/>
<evidence type="ECO:0000255" key="3">
    <source>
        <dbReference type="PROSITE-ProRule" id="PRU01005"/>
    </source>
</evidence>
<evidence type="ECO:0000305" key="4"/>